<dbReference type="EC" id="3.4.21.-" evidence="1"/>
<dbReference type="EMBL" id="AE000516">
    <property type="protein sequence ID" value="AAK46567.1"/>
    <property type="status" value="ALT_INIT"/>
    <property type="molecule type" value="Genomic_DNA"/>
</dbReference>
<dbReference type="PIR" id="D70776">
    <property type="entry name" value="D70776"/>
</dbReference>
<dbReference type="RefSeq" id="WP_003411486.1">
    <property type="nucleotide sequence ID" value="NZ_KK341227.1"/>
</dbReference>
<dbReference type="SMR" id="P9WHR2"/>
<dbReference type="ESTHER" id="myctu-ym24">
    <property type="family name" value="Tiancimycin-TnmK-Tripeptidase-HIP"/>
</dbReference>
<dbReference type="MEROPS" id="S33.023"/>
<dbReference type="GeneID" id="45426201"/>
<dbReference type="KEGG" id="mtc:MT2282"/>
<dbReference type="PATRIC" id="fig|83331.31.peg.2456"/>
<dbReference type="HOGENOM" id="CLU_013364_3_1_11"/>
<dbReference type="Proteomes" id="UP000001020">
    <property type="component" value="Chromosome"/>
</dbReference>
<dbReference type="GO" id="GO:0030313">
    <property type="term" value="C:cell envelope"/>
    <property type="evidence" value="ECO:0007669"/>
    <property type="project" value="UniProtKB-SubCell"/>
</dbReference>
<dbReference type="GO" id="GO:0005886">
    <property type="term" value="C:plasma membrane"/>
    <property type="evidence" value="ECO:0007669"/>
    <property type="project" value="UniProtKB-SubCell"/>
</dbReference>
<dbReference type="GO" id="GO:0016787">
    <property type="term" value="F:hydrolase activity"/>
    <property type="evidence" value="ECO:0007669"/>
    <property type="project" value="UniProtKB-KW"/>
</dbReference>
<dbReference type="Gene3D" id="3.40.50.1820">
    <property type="entry name" value="alpha/beta hydrolase"/>
    <property type="match status" value="1"/>
</dbReference>
<dbReference type="InterPro" id="IPR000073">
    <property type="entry name" value="AB_hydrolase_1"/>
</dbReference>
<dbReference type="InterPro" id="IPR029058">
    <property type="entry name" value="AB_hydrolase_fold"/>
</dbReference>
<dbReference type="InterPro" id="IPR051601">
    <property type="entry name" value="Serine_prot/Carboxylest_S33"/>
</dbReference>
<dbReference type="PANTHER" id="PTHR43248">
    <property type="entry name" value="2-SUCCINYL-6-HYDROXY-2,4-CYCLOHEXADIENE-1-CARBOXYLATE SYNTHASE"/>
    <property type="match status" value="1"/>
</dbReference>
<dbReference type="PANTHER" id="PTHR43248:SF29">
    <property type="entry name" value="TRIPEPTIDYL AMINOPEPTIDASE"/>
    <property type="match status" value="1"/>
</dbReference>
<dbReference type="Pfam" id="PF00561">
    <property type="entry name" value="Abhydrolase_1"/>
    <property type="match status" value="1"/>
</dbReference>
<dbReference type="SUPFAM" id="SSF53474">
    <property type="entry name" value="alpha/beta-Hydrolases"/>
    <property type="match status" value="1"/>
</dbReference>
<dbReference type="PROSITE" id="PS51257">
    <property type="entry name" value="PROKAR_LIPOPROTEIN"/>
    <property type="match status" value="1"/>
</dbReference>
<keyword id="KW-1003">Cell membrane</keyword>
<keyword id="KW-0378">Hydrolase</keyword>
<keyword id="KW-0449">Lipoprotein</keyword>
<keyword id="KW-0472">Membrane</keyword>
<keyword id="KW-0564">Palmitate</keyword>
<keyword id="KW-1185">Reference proteome</keyword>
<keyword id="KW-0732">Signal</keyword>
<keyword id="KW-0843">Virulence</keyword>
<gene>
    <name evidence="1" type="primary">hip1</name>
    <name evidence="5" type="synonym">caeA</name>
    <name type="ordered locus">MT2282</name>
</gene>
<organism>
    <name type="scientific">Mycobacterium tuberculosis (strain CDC 1551 / Oshkosh)</name>
    <dbReference type="NCBI Taxonomy" id="83331"/>
    <lineage>
        <taxon>Bacteria</taxon>
        <taxon>Bacillati</taxon>
        <taxon>Actinomycetota</taxon>
        <taxon>Actinomycetes</taxon>
        <taxon>Mycobacteriales</taxon>
        <taxon>Mycobacteriaceae</taxon>
        <taxon>Mycobacterium</taxon>
        <taxon>Mycobacterium tuberculosis complex</taxon>
    </lineage>
</organism>
<proteinExistence type="evidence at protein level"/>
<comment type="function">
    <text evidence="1 4">Serine protease that promotes tuberculosis (TB) pathogenesis by promoting the processing and the extracellular release of the M.tuberculosis (Mtb) heat-shock protein GroEL2 (By similarity). In vitro, catalyzes the cleavage of ester bonds. Esterase activity increases with increasing carbon chain length of the substrate (PubMed:17428787).</text>
</comment>
<comment type="function">
    <text evidence="1">Key immunomodulatory virulence factor, which promotes survival in host macrophages and modulates host immune responses.</text>
</comment>
<comment type="biophysicochemical properties">
    <kinetics>
        <KM evidence="4">738 uM for 4-methylumbelliferyl butyrate</KM>
        <Vmax evidence="4">128.0 umol/min/mg enzyme with 4-methylumbelliferyl butyrate as substrate</Vmax>
    </kinetics>
    <phDependence>
        <text evidence="4">Optimum pH is 7.</text>
    </phDependence>
</comment>
<comment type="subunit">
    <text evidence="4">Monomer.</text>
</comment>
<comment type="subcellular location">
    <subcellularLocation>
        <location evidence="4">Cell envelope</location>
    </subcellularLocation>
    <subcellularLocation>
        <location evidence="3">Cell membrane</location>
        <topology evidence="3">Lipid-anchor</topology>
    </subcellularLocation>
</comment>
<comment type="disruption phenotype">
    <text evidence="4">Mouse aerosol infections with this mutant show reduced colony-forming unit loads in lungs and spleens and reduced lung pathology. High dose intravenous infection of mice with the mutant results in a significantly delayed mortality compared with the wild-type.</text>
</comment>
<comment type="similarity">
    <text evidence="6">Belongs to the peptidase S33 family.</text>
</comment>
<comment type="sequence caution" evidence="6">
    <conflict type="erroneous initiation">
        <sequence resource="EMBL-CDS" id="AAK46567"/>
    </conflict>
    <text>Truncated N-terminus.</text>
</comment>
<feature type="signal peptide" evidence="3">
    <location>
        <begin position="1"/>
        <end position="30"/>
    </location>
</feature>
<feature type="chain" id="PRO_0000428138" description="Serine protease Hip1">
    <location>
        <begin position="31"/>
        <end position="520"/>
    </location>
</feature>
<feature type="domain" description="AB hydrolase-1" evidence="2">
    <location>
        <begin position="102"/>
        <end position="497"/>
    </location>
</feature>
<feature type="active site" description="Nucleophile" evidence="7">
    <location>
        <position position="228"/>
    </location>
</feature>
<feature type="active site" evidence="7">
    <location>
        <position position="463"/>
    </location>
</feature>
<feature type="active site" description="Proton donor" evidence="7">
    <location>
        <position position="490"/>
    </location>
</feature>
<feature type="lipid moiety-binding region" description="N-palmitoyl cysteine" evidence="3">
    <location>
        <position position="31"/>
    </location>
</feature>
<feature type="lipid moiety-binding region" description="S-diacylglycerol cysteine" evidence="3">
    <location>
        <position position="31"/>
    </location>
</feature>
<feature type="mutagenesis site" description="Completely abolishes esterase activity." evidence="4">
    <original>S</original>
    <variation>A</variation>
    <location>
        <position position="228"/>
    </location>
</feature>
<feature type="mutagenesis site" description="Completely abolishes esterase activity." evidence="4">
    <original>D</original>
    <variation>A</variation>
    <location>
        <position position="463"/>
    </location>
</feature>
<feature type="mutagenesis site" description="Completely abolishes esterase activity." evidence="4">
    <original>H</original>
    <variation>A</variation>
    <location>
        <position position="490"/>
    </location>
</feature>
<sequence length="520" mass="55924">MGMRLSRRDKIARMLLIWAALAAVALVLVGCIRVVGGRARMAEPKLGQPVEWTPCRSSNPQVKIPGGALCGKLAVPVDYDRPDGDVAALALIRFPATGDKIGSLVINPGGPGESGIEAALGVFQTLPKRVHERFDLVGFDPRGVASSRPAIWCNSDADNDRLRAEPQVDYSREGVAHIENETKQFVGRCVDKMGKNFLAHVGTVNVAKDLDAIRAALGDDKLTYLGYSYGTRIGSAYAEEFPQRVRAMILDGAVDPNADPIEAELRQAKGFQDAFNNYAADCAKNAGCPLGADPAKAVEVYHSLVDPLVDPDNPRISRPARTKDPRGLSYSDAIVGTIMALYSPNLWQHLTDGLSELVDNRGDTLLALADMYMRRDSHGRYNNSGDARVAINCVDQPPVTDRDKVIDEDRRAREIAPFMSYGKFTGDAPLGTCAFWPVPPTSQPHAVSAPGLVPTVVVSTTHDPATPYKAGVDLANQLRGSLLTFDGTQHTVVFQGDSCIDEYVTAYLIGGTTPPSGAKC</sequence>
<accession>P9WHR2</accession>
<accession>L0TBN5</accession>
<accession>P65823</accession>
<accession>Q10509</accession>
<evidence type="ECO:0000250" key="1">
    <source>
        <dbReference type="UniProtKB" id="P9WHR3"/>
    </source>
</evidence>
<evidence type="ECO:0000255" key="2"/>
<evidence type="ECO:0000255" key="3">
    <source>
        <dbReference type="PROSITE-ProRule" id="PRU00303"/>
    </source>
</evidence>
<evidence type="ECO:0000269" key="4">
    <source>
    </source>
</evidence>
<evidence type="ECO:0000303" key="5">
    <source>
    </source>
</evidence>
<evidence type="ECO:0000305" key="6"/>
<evidence type="ECO:0000305" key="7">
    <source>
    </source>
</evidence>
<name>HIP1_MYCTO</name>
<reference key="1">
    <citation type="journal article" date="2002" name="J. Bacteriol.">
        <title>Whole-genome comparison of Mycobacterium tuberculosis clinical and laboratory strains.</title>
        <authorList>
            <person name="Fleischmann R.D."/>
            <person name="Alland D."/>
            <person name="Eisen J.A."/>
            <person name="Carpenter L."/>
            <person name="White O."/>
            <person name="Peterson J.D."/>
            <person name="DeBoy R.T."/>
            <person name="Dodson R.J."/>
            <person name="Gwinn M.L."/>
            <person name="Haft D.H."/>
            <person name="Hickey E.K."/>
            <person name="Kolonay J.F."/>
            <person name="Nelson W.C."/>
            <person name="Umayam L.A."/>
            <person name="Ermolaeva M.D."/>
            <person name="Salzberg S.L."/>
            <person name="Delcher A."/>
            <person name="Utterback T.R."/>
            <person name="Weidman J.F."/>
            <person name="Khouri H.M."/>
            <person name="Gill J."/>
            <person name="Mikula A."/>
            <person name="Bishai W."/>
            <person name="Jacobs W.R. Jr."/>
            <person name="Venter J.C."/>
            <person name="Fraser C.M."/>
        </authorList>
    </citation>
    <scope>NUCLEOTIDE SEQUENCE [LARGE SCALE GENOMIC DNA]</scope>
    <source>
        <strain>CDC 1551 / Oshkosh</strain>
    </source>
</reference>
<reference key="2">
    <citation type="journal article" date="2007" name="J. Biol. Chem.">
        <title>Characterization of a novel cell wall-anchored protein with carboxylesterase activity required for virulence in Mycobacterium tuberculosis.</title>
        <authorList>
            <person name="Lun S."/>
            <person name="Bishai W.R."/>
        </authorList>
    </citation>
    <scope>FUNCTION</scope>
    <scope>BIOPHYSICOCHEMICAL PROPERTIES</scope>
    <scope>SUBUNIT</scope>
    <scope>SUBCELLULAR LOCATION</scope>
    <scope>DISRUPTION PHENOTYPE</scope>
    <scope>MUTAGENESIS OF SER-228; ASP-463 AND HIS-490</scope>
    <scope>ACTIVE SITE</scope>
    <scope>NOMENCLATURE</scope>
    <source>
        <strain>CDC 1551 / Oshkosh</strain>
    </source>
</reference>
<protein>
    <recommendedName>
        <fullName evidence="1">Serine protease Hip1</fullName>
        <ecNumber evidence="1">3.4.21.-</ecNumber>
    </recommendedName>
    <alternativeName>
        <fullName evidence="5">Carboxylesterase A</fullName>
    </alternativeName>
</protein>